<feature type="chain" id="PRO_0000322281" description="Small ribosomal subunit protein uS4">
    <location>
        <begin position="1"/>
        <end position="208"/>
    </location>
</feature>
<feature type="domain" description="S4 RNA-binding" evidence="1">
    <location>
        <begin position="98"/>
        <end position="161"/>
    </location>
</feature>
<dbReference type="EMBL" id="CP000776">
    <property type="protein sequence ID" value="ABS51539.1"/>
    <property type="molecule type" value="Genomic_DNA"/>
</dbReference>
<dbReference type="RefSeq" id="WP_012108094.1">
    <property type="nucleotide sequence ID" value="NC_009714.1"/>
</dbReference>
<dbReference type="SMR" id="A7HZX2"/>
<dbReference type="STRING" id="360107.CHAB381_0206"/>
<dbReference type="KEGG" id="cha:CHAB381_0206"/>
<dbReference type="eggNOG" id="COG0522">
    <property type="taxonomic scope" value="Bacteria"/>
</dbReference>
<dbReference type="HOGENOM" id="CLU_092403_0_1_7"/>
<dbReference type="OrthoDB" id="9803672at2"/>
<dbReference type="Proteomes" id="UP000002407">
    <property type="component" value="Chromosome"/>
</dbReference>
<dbReference type="GO" id="GO:0015935">
    <property type="term" value="C:small ribosomal subunit"/>
    <property type="evidence" value="ECO:0007669"/>
    <property type="project" value="InterPro"/>
</dbReference>
<dbReference type="GO" id="GO:0019843">
    <property type="term" value="F:rRNA binding"/>
    <property type="evidence" value="ECO:0007669"/>
    <property type="project" value="UniProtKB-UniRule"/>
</dbReference>
<dbReference type="GO" id="GO:0003735">
    <property type="term" value="F:structural constituent of ribosome"/>
    <property type="evidence" value="ECO:0007669"/>
    <property type="project" value="InterPro"/>
</dbReference>
<dbReference type="GO" id="GO:0042274">
    <property type="term" value="P:ribosomal small subunit biogenesis"/>
    <property type="evidence" value="ECO:0007669"/>
    <property type="project" value="TreeGrafter"/>
</dbReference>
<dbReference type="GO" id="GO:0006412">
    <property type="term" value="P:translation"/>
    <property type="evidence" value="ECO:0007669"/>
    <property type="project" value="UniProtKB-UniRule"/>
</dbReference>
<dbReference type="CDD" id="cd00165">
    <property type="entry name" value="S4"/>
    <property type="match status" value="1"/>
</dbReference>
<dbReference type="FunFam" id="1.10.1050.10:FF:000001">
    <property type="entry name" value="30S ribosomal protein S4"/>
    <property type="match status" value="1"/>
</dbReference>
<dbReference type="FunFam" id="3.10.290.10:FF:000001">
    <property type="entry name" value="30S ribosomal protein S4"/>
    <property type="match status" value="1"/>
</dbReference>
<dbReference type="Gene3D" id="1.10.1050.10">
    <property type="entry name" value="Ribosomal Protein S4 Delta 41, Chain A, domain 1"/>
    <property type="match status" value="1"/>
</dbReference>
<dbReference type="Gene3D" id="3.10.290.10">
    <property type="entry name" value="RNA-binding S4 domain"/>
    <property type="match status" value="1"/>
</dbReference>
<dbReference type="HAMAP" id="MF_01306_B">
    <property type="entry name" value="Ribosomal_uS4_B"/>
    <property type="match status" value="1"/>
</dbReference>
<dbReference type="InterPro" id="IPR022801">
    <property type="entry name" value="Ribosomal_uS4"/>
</dbReference>
<dbReference type="InterPro" id="IPR005709">
    <property type="entry name" value="Ribosomal_uS4_bac-type"/>
</dbReference>
<dbReference type="InterPro" id="IPR018079">
    <property type="entry name" value="Ribosomal_uS4_CS"/>
</dbReference>
<dbReference type="InterPro" id="IPR001912">
    <property type="entry name" value="Ribosomal_uS4_N"/>
</dbReference>
<dbReference type="InterPro" id="IPR002942">
    <property type="entry name" value="S4_RNA-bd"/>
</dbReference>
<dbReference type="InterPro" id="IPR036986">
    <property type="entry name" value="S4_RNA-bd_sf"/>
</dbReference>
<dbReference type="NCBIfam" id="NF003717">
    <property type="entry name" value="PRK05327.1"/>
    <property type="match status" value="1"/>
</dbReference>
<dbReference type="NCBIfam" id="TIGR01017">
    <property type="entry name" value="rpsD_bact"/>
    <property type="match status" value="1"/>
</dbReference>
<dbReference type="PANTHER" id="PTHR11831">
    <property type="entry name" value="30S 40S RIBOSOMAL PROTEIN"/>
    <property type="match status" value="1"/>
</dbReference>
<dbReference type="PANTHER" id="PTHR11831:SF4">
    <property type="entry name" value="SMALL RIBOSOMAL SUBUNIT PROTEIN US4M"/>
    <property type="match status" value="1"/>
</dbReference>
<dbReference type="Pfam" id="PF00163">
    <property type="entry name" value="Ribosomal_S4"/>
    <property type="match status" value="1"/>
</dbReference>
<dbReference type="Pfam" id="PF01479">
    <property type="entry name" value="S4"/>
    <property type="match status" value="1"/>
</dbReference>
<dbReference type="SMART" id="SM01390">
    <property type="entry name" value="Ribosomal_S4"/>
    <property type="match status" value="1"/>
</dbReference>
<dbReference type="SMART" id="SM00363">
    <property type="entry name" value="S4"/>
    <property type="match status" value="1"/>
</dbReference>
<dbReference type="SUPFAM" id="SSF55174">
    <property type="entry name" value="Alpha-L RNA-binding motif"/>
    <property type="match status" value="1"/>
</dbReference>
<dbReference type="PROSITE" id="PS00632">
    <property type="entry name" value="RIBOSOMAL_S4"/>
    <property type="match status" value="1"/>
</dbReference>
<dbReference type="PROSITE" id="PS50889">
    <property type="entry name" value="S4"/>
    <property type="match status" value="1"/>
</dbReference>
<gene>
    <name evidence="1" type="primary">rpsD</name>
    <name type="ordered locus">CHAB381_0206</name>
</gene>
<evidence type="ECO:0000255" key="1">
    <source>
        <dbReference type="HAMAP-Rule" id="MF_01306"/>
    </source>
</evidence>
<evidence type="ECO:0000305" key="2"/>
<reference key="1">
    <citation type="submission" date="2007-07" db="EMBL/GenBank/DDBJ databases">
        <title>Complete genome sequence of Campylobacter hominis ATCC BAA-381, a commensal isolated from the human gastrointestinal tract.</title>
        <authorList>
            <person name="Fouts D.E."/>
            <person name="Mongodin E.F."/>
            <person name="Puiu D."/>
            <person name="Sebastian Y."/>
            <person name="Miller W.G."/>
            <person name="Mandrell R.E."/>
            <person name="Nelson K.E."/>
        </authorList>
    </citation>
    <scope>NUCLEOTIDE SEQUENCE [LARGE SCALE GENOMIC DNA]</scope>
    <source>
        <strain>ATCC BAA-381 / DSM 21671 / CCUG 45161 / LMG 19568 / NCTC 13146 / CH001A</strain>
    </source>
</reference>
<proteinExistence type="inferred from homology"/>
<accession>A7HZX2</accession>
<name>RS4_CAMHC</name>
<keyword id="KW-1185">Reference proteome</keyword>
<keyword id="KW-0687">Ribonucleoprotein</keyword>
<keyword id="KW-0689">Ribosomal protein</keyword>
<keyword id="KW-0694">RNA-binding</keyword>
<keyword id="KW-0699">rRNA-binding</keyword>
<comment type="function">
    <text evidence="1">One of the primary rRNA binding proteins, it binds directly to 16S rRNA where it nucleates assembly of the body of the 30S subunit.</text>
</comment>
<comment type="function">
    <text evidence="1">With S5 and S12 plays an important role in translational accuracy.</text>
</comment>
<comment type="subunit">
    <text evidence="1">Part of the 30S ribosomal subunit. Contacts protein S5. The interaction surface between S4 and S5 is involved in control of translational fidelity.</text>
</comment>
<comment type="similarity">
    <text evidence="1">Belongs to the universal ribosomal protein uS4 family.</text>
</comment>
<protein>
    <recommendedName>
        <fullName evidence="1">Small ribosomal subunit protein uS4</fullName>
    </recommendedName>
    <alternativeName>
        <fullName evidence="2">30S ribosomal protein S4</fullName>
    </alternativeName>
</protein>
<organism>
    <name type="scientific">Campylobacter hominis (strain ATCC BAA-381 / DSM 21671 / CCUG 45161 / LMG 19568 / NCTC 13146 / CH001A)</name>
    <dbReference type="NCBI Taxonomy" id="360107"/>
    <lineage>
        <taxon>Bacteria</taxon>
        <taxon>Pseudomonadati</taxon>
        <taxon>Campylobacterota</taxon>
        <taxon>Epsilonproteobacteria</taxon>
        <taxon>Campylobacterales</taxon>
        <taxon>Campylobacteraceae</taxon>
        <taxon>Campylobacter</taxon>
    </lineage>
</organism>
<sequence>MSRYTGPVEKLERRLGVDLFMKGERRLAGKSALLKRPYAPGQHGQRRAKVSEYGSQLREKQKAKFMYGLSEKQFRRLFKEAARREGNTGEILVQLLEQRLDNLVYRMGFATTRRFARQLVTHGHILVDGKRVDIPSYSVKVGQKIEIAEKSKNNPQILRAVELTAQTGIVAWVDVEKDKKFGIFTRKPERDEIVIPIEERFIVELYSK</sequence>